<protein>
    <recommendedName>
        <fullName evidence="1">DNA ligase</fullName>
        <ecNumber evidence="1">6.5.1.1</ecNumber>
    </recommendedName>
    <alternativeName>
        <fullName evidence="1">Polydeoxyribonucleotide synthase [ATP]</fullName>
    </alternativeName>
</protein>
<sequence>MQFGELVKTLAAVESTTQRTTMVKLLTSLLKRARPDEVDKIVYFVLGDLKPPWEGVELGVAEKLCLRAVSKAAGTPLSELEAVYKRTGDVGEAARRALSAAKRPGLLAFGQQKPLEVSEVYDTLLKVAKAAGEGAQDMKISLLASLFARATPEEAKYIARFVVGKLRLGVADMTLLEALSEAFGVGKEALERAYHVWPDMGKLARHVAEGRPLEEVKITPGVPVLPMLAQRLSSASEILAKLGGAAVCEYKYDGERAQIHISGGSVKIFSRRLEDITHAYPDVVKAVKESVAAGEAILEGEIVAVDPDTGDMLPFQELMHRKRKHEVAAAVESYPAVLNLFDVLYLDGEDLTGEPLIYRRLRLSEVVHETEKVSIARWRLFDDPGEVDVFFHEAVSLGMEGLVCKSPTSIYEMGARGWNWIKYKRDYKSEMIDTVDLVVVGAFYGRGKRAGLYGAFLLAAYDPQTDMFYTVCKVGSGFTDADLKKMYEVLQPYKIPHRHPRVVSKMTPDVWFTPQVVIEVIGAEITLSPLHTCCLGAVRPGVGLAIRFPRFTGRYRTDKSPEQATTPAEMVELYKRQKKVAQPE</sequence>
<reference key="1">
    <citation type="submission" date="2008-03" db="EMBL/GenBank/DDBJ databases">
        <title>Complete sequence of Thermoproteus neutrophilus V24Sta.</title>
        <authorList>
            <consortium name="US DOE Joint Genome Institute"/>
            <person name="Copeland A."/>
            <person name="Lucas S."/>
            <person name="Lapidus A."/>
            <person name="Glavina del Rio T."/>
            <person name="Dalin E."/>
            <person name="Tice H."/>
            <person name="Bruce D."/>
            <person name="Goodwin L."/>
            <person name="Pitluck S."/>
            <person name="Sims D."/>
            <person name="Brettin T."/>
            <person name="Detter J.C."/>
            <person name="Han C."/>
            <person name="Kuske C.R."/>
            <person name="Schmutz J."/>
            <person name="Larimer F."/>
            <person name="Land M."/>
            <person name="Hauser L."/>
            <person name="Kyrpides N."/>
            <person name="Mikhailova N."/>
            <person name="Biddle J.F."/>
            <person name="Zhang Z."/>
            <person name="Fitz-Gibbon S.T."/>
            <person name="Lowe T.M."/>
            <person name="Saltikov C."/>
            <person name="House C.H."/>
            <person name="Richardson P."/>
        </authorList>
    </citation>
    <scope>NUCLEOTIDE SEQUENCE [LARGE SCALE GENOMIC DNA]</scope>
    <source>
        <strain>DSM 2338 / JCM 9278 / NBRC 100436 / V24Sta</strain>
    </source>
</reference>
<accession>B1YA52</accession>
<dbReference type="EC" id="6.5.1.1" evidence="1"/>
<dbReference type="EMBL" id="CP001014">
    <property type="protein sequence ID" value="ACB39026.1"/>
    <property type="molecule type" value="Genomic_DNA"/>
</dbReference>
<dbReference type="RefSeq" id="WP_012349447.1">
    <property type="nucleotide sequence ID" value="NC_010525.1"/>
</dbReference>
<dbReference type="SMR" id="B1YA52"/>
<dbReference type="STRING" id="444157.Tneu_0068"/>
<dbReference type="GeneID" id="6164678"/>
<dbReference type="KEGG" id="tne:Tneu_0068"/>
<dbReference type="eggNOG" id="arCOG01347">
    <property type="taxonomic scope" value="Archaea"/>
</dbReference>
<dbReference type="HOGENOM" id="CLU_005138_6_0_2"/>
<dbReference type="OrthoDB" id="31274at2157"/>
<dbReference type="Proteomes" id="UP000001694">
    <property type="component" value="Chromosome"/>
</dbReference>
<dbReference type="GO" id="GO:0005524">
    <property type="term" value="F:ATP binding"/>
    <property type="evidence" value="ECO:0007669"/>
    <property type="project" value="UniProtKB-UniRule"/>
</dbReference>
<dbReference type="GO" id="GO:0003677">
    <property type="term" value="F:DNA binding"/>
    <property type="evidence" value="ECO:0007669"/>
    <property type="project" value="InterPro"/>
</dbReference>
<dbReference type="GO" id="GO:0003910">
    <property type="term" value="F:DNA ligase (ATP) activity"/>
    <property type="evidence" value="ECO:0007669"/>
    <property type="project" value="UniProtKB-UniRule"/>
</dbReference>
<dbReference type="GO" id="GO:0046872">
    <property type="term" value="F:metal ion binding"/>
    <property type="evidence" value="ECO:0007669"/>
    <property type="project" value="UniProtKB-KW"/>
</dbReference>
<dbReference type="GO" id="GO:0051301">
    <property type="term" value="P:cell division"/>
    <property type="evidence" value="ECO:0007669"/>
    <property type="project" value="UniProtKB-KW"/>
</dbReference>
<dbReference type="GO" id="GO:0071897">
    <property type="term" value="P:DNA biosynthetic process"/>
    <property type="evidence" value="ECO:0007669"/>
    <property type="project" value="InterPro"/>
</dbReference>
<dbReference type="GO" id="GO:0006310">
    <property type="term" value="P:DNA recombination"/>
    <property type="evidence" value="ECO:0007669"/>
    <property type="project" value="UniProtKB-UniRule"/>
</dbReference>
<dbReference type="GO" id="GO:0006281">
    <property type="term" value="P:DNA repair"/>
    <property type="evidence" value="ECO:0007669"/>
    <property type="project" value="UniProtKB-UniRule"/>
</dbReference>
<dbReference type="GO" id="GO:0006273">
    <property type="term" value="P:lagging strand elongation"/>
    <property type="evidence" value="ECO:0007669"/>
    <property type="project" value="TreeGrafter"/>
</dbReference>
<dbReference type="CDD" id="cd07901">
    <property type="entry name" value="Adenylation_DNA_ligase_Arch_LigB"/>
    <property type="match status" value="1"/>
</dbReference>
<dbReference type="CDD" id="cd07969">
    <property type="entry name" value="OBF_DNA_ligase_I"/>
    <property type="match status" value="1"/>
</dbReference>
<dbReference type="FunFam" id="1.10.3260.10:FF:000007">
    <property type="entry name" value="DNA ligase"/>
    <property type="match status" value="1"/>
</dbReference>
<dbReference type="FunFam" id="2.40.50.140:FF:000062">
    <property type="entry name" value="DNA ligase"/>
    <property type="match status" value="1"/>
</dbReference>
<dbReference type="FunFam" id="3.30.470.30:FF:000012">
    <property type="entry name" value="Probable DNA ligase"/>
    <property type="match status" value="1"/>
</dbReference>
<dbReference type="Gene3D" id="1.10.3260.10">
    <property type="entry name" value="DNA ligase, ATP-dependent, N-terminal domain"/>
    <property type="match status" value="1"/>
</dbReference>
<dbReference type="Gene3D" id="3.30.470.30">
    <property type="entry name" value="DNA ligase/mRNA capping enzyme"/>
    <property type="match status" value="1"/>
</dbReference>
<dbReference type="Gene3D" id="2.40.50.140">
    <property type="entry name" value="Nucleic acid-binding proteins"/>
    <property type="match status" value="1"/>
</dbReference>
<dbReference type="HAMAP" id="MF_00407">
    <property type="entry name" value="DNA_ligase"/>
    <property type="match status" value="1"/>
</dbReference>
<dbReference type="InterPro" id="IPR050191">
    <property type="entry name" value="ATP-dep_DNA_ligase"/>
</dbReference>
<dbReference type="InterPro" id="IPR022865">
    <property type="entry name" value="DNA_ligae_ATP-dep_bac/arc"/>
</dbReference>
<dbReference type="InterPro" id="IPR000977">
    <property type="entry name" value="DNA_ligase_ATP-dep"/>
</dbReference>
<dbReference type="InterPro" id="IPR012309">
    <property type="entry name" value="DNA_ligase_ATP-dep_C"/>
</dbReference>
<dbReference type="InterPro" id="IPR012310">
    <property type="entry name" value="DNA_ligase_ATP-dep_cent"/>
</dbReference>
<dbReference type="InterPro" id="IPR016059">
    <property type="entry name" value="DNA_ligase_ATP-dep_CS"/>
</dbReference>
<dbReference type="InterPro" id="IPR012308">
    <property type="entry name" value="DNA_ligase_ATP-dep_N"/>
</dbReference>
<dbReference type="InterPro" id="IPR036599">
    <property type="entry name" value="DNA_ligase_N_sf"/>
</dbReference>
<dbReference type="InterPro" id="IPR012340">
    <property type="entry name" value="NA-bd_OB-fold"/>
</dbReference>
<dbReference type="NCBIfam" id="TIGR00574">
    <property type="entry name" value="dnl1"/>
    <property type="match status" value="1"/>
</dbReference>
<dbReference type="PANTHER" id="PTHR45674:SF4">
    <property type="entry name" value="DNA LIGASE 1"/>
    <property type="match status" value="1"/>
</dbReference>
<dbReference type="PANTHER" id="PTHR45674">
    <property type="entry name" value="DNA LIGASE 1/3 FAMILY MEMBER"/>
    <property type="match status" value="1"/>
</dbReference>
<dbReference type="Pfam" id="PF04679">
    <property type="entry name" value="DNA_ligase_A_C"/>
    <property type="match status" value="1"/>
</dbReference>
<dbReference type="Pfam" id="PF01068">
    <property type="entry name" value="DNA_ligase_A_M"/>
    <property type="match status" value="1"/>
</dbReference>
<dbReference type="Pfam" id="PF04675">
    <property type="entry name" value="DNA_ligase_A_N"/>
    <property type="match status" value="1"/>
</dbReference>
<dbReference type="SUPFAM" id="SSF117018">
    <property type="entry name" value="ATP-dependent DNA ligase DNA-binding domain"/>
    <property type="match status" value="1"/>
</dbReference>
<dbReference type="SUPFAM" id="SSF56091">
    <property type="entry name" value="DNA ligase/mRNA capping enzyme, catalytic domain"/>
    <property type="match status" value="1"/>
</dbReference>
<dbReference type="SUPFAM" id="SSF50249">
    <property type="entry name" value="Nucleic acid-binding proteins"/>
    <property type="match status" value="1"/>
</dbReference>
<dbReference type="PROSITE" id="PS00697">
    <property type="entry name" value="DNA_LIGASE_A1"/>
    <property type="match status" value="1"/>
</dbReference>
<dbReference type="PROSITE" id="PS50160">
    <property type="entry name" value="DNA_LIGASE_A3"/>
    <property type="match status" value="1"/>
</dbReference>
<feature type="chain" id="PRO_0000365267" description="DNA ligase">
    <location>
        <begin position="1"/>
        <end position="584"/>
    </location>
</feature>
<feature type="active site" description="N6-AMP-lysine intermediate" evidence="1">
    <location>
        <position position="251"/>
    </location>
</feature>
<feature type="binding site" evidence="1">
    <location>
        <position position="249"/>
    </location>
    <ligand>
        <name>ATP</name>
        <dbReference type="ChEBI" id="CHEBI:30616"/>
    </ligand>
</feature>
<feature type="binding site" evidence="1">
    <location>
        <position position="256"/>
    </location>
    <ligand>
        <name>ATP</name>
        <dbReference type="ChEBI" id="CHEBI:30616"/>
    </ligand>
</feature>
<feature type="binding site" evidence="1">
    <location>
        <position position="271"/>
    </location>
    <ligand>
        <name>ATP</name>
        <dbReference type="ChEBI" id="CHEBI:30616"/>
    </ligand>
</feature>
<feature type="binding site" evidence="1">
    <location>
        <position position="301"/>
    </location>
    <ligand>
        <name>ATP</name>
        <dbReference type="ChEBI" id="CHEBI:30616"/>
    </ligand>
</feature>
<feature type="binding site" evidence="1">
    <location>
        <position position="341"/>
    </location>
    <ligand>
        <name>ATP</name>
        <dbReference type="ChEBI" id="CHEBI:30616"/>
    </ligand>
</feature>
<feature type="binding site" evidence="1">
    <location>
        <position position="416"/>
    </location>
    <ligand>
        <name>ATP</name>
        <dbReference type="ChEBI" id="CHEBI:30616"/>
    </ligand>
</feature>
<feature type="binding site" evidence="1">
    <location>
        <position position="422"/>
    </location>
    <ligand>
        <name>ATP</name>
        <dbReference type="ChEBI" id="CHEBI:30616"/>
    </ligand>
</feature>
<comment type="function">
    <text evidence="1">DNA ligase that seals nicks in double-stranded DNA during DNA replication, DNA recombination and DNA repair.</text>
</comment>
<comment type="catalytic activity">
    <reaction evidence="1">
        <text>ATP + (deoxyribonucleotide)n-3'-hydroxyl + 5'-phospho-(deoxyribonucleotide)m = (deoxyribonucleotide)n+m + AMP + diphosphate.</text>
        <dbReference type="EC" id="6.5.1.1"/>
    </reaction>
</comment>
<comment type="cofactor">
    <cofactor evidence="1">
        <name>Mg(2+)</name>
        <dbReference type="ChEBI" id="CHEBI:18420"/>
    </cofactor>
</comment>
<comment type="similarity">
    <text evidence="1">Belongs to the ATP-dependent DNA ligase family.</text>
</comment>
<keyword id="KW-0067">ATP-binding</keyword>
<keyword id="KW-0131">Cell cycle</keyword>
<keyword id="KW-0132">Cell division</keyword>
<keyword id="KW-0227">DNA damage</keyword>
<keyword id="KW-0233">DNA recombination</keyword>
<keyword id="KW-0234">DNA repair</keyword>
<keyword id="KW-0235">DNA replication</keyword>
<keyword id="KW-0436">Ligase</keyword>
<keyword id="KW-0460">Magnesium</keyword>
<keyword id="KW-0479">Metal-binding</keyword>
<keyword id="KW-0547">Nucleotide-binding</keyword>
<gene>
    <name evidence="1" type="primary">lig</name>
    <name type="ordered locus">Tneu_0068</name>
</gene>
<organism>
    <name type="scientific">Pyrobaculum neutrophilum (strain DSM 2338 / JCM 9278 / NBRC 100436 / V24Sta)</name>
    <name type="common">Thermoproteus neutrophilus</name>
    <dbReference type="NCBI Taxonomy" id="444157"/>
    <lineage>
        <taxon>Archaea</taxon>
        <taxon>Thermoproteota</taxon>
        <taxon>Thermoprotei</taxon>
        <taxon>Thermoproteales</taxon>
        <taxon>Thermoproteaceae</taxon>
        <taxon>Pyrobaculum</taxon>
    </lineage>
</organism>
<name>DNLI_PYRNV</name>
<evidence type="ECO:0000255" key="1">
    <source>
        <dbReference type="HAMAP-Rule" id="MF_00407"/>
    </source>
</evidence>
<proteinExistence type="inferred from homology"/>